<name>ORTH5_ARATH</name>
<evidence type="ECO:0000250" key="1"/>
<evidence type="ECO:0000255" key="2">
    <source>
        <dbReference type="PROSITE-ProRule" id="PRU00175"/>
    </source>
</evidence>
<evidence type="ECO:0000255" key="3">
    <source>
        <dbReference type="PROSITE-ProRule" id="PRU00358"/>
    </source>
</evidence>
<evidence type="ECO:0000256" key="4">
    <source>
        <dbReference type="SAM" id="MobiDB-lite"/>
    </source>
</evidence>
<evidence type="ECO:0000269" key="5">
    <source>
    </source>
</evidence>
<evidence type="ECO:0000269" key="6">
    <source>
    </source>
</evidence>
<evidence type="ECO:0000305" key="7"/>
<protein>
    <recommendedName>
        <fullName>E3 ubiquitin-protein ligase ORTHRUS 5</fullName>
        <ecNumber>2.3.2.27</ecNumber>
    </recommendedName>
    <alternativeName>
        <fullName>Protein VARIANT IN METHYLATION 2</fullName>
    </alternativeName>
    <alternativeName>
        <fullName evidence="7">RING-type E3 ubiquitin transferase ORTHRUS 5</fullName>
    </alternativeName>
</protein>
<feature type="chain" id="PRO_0000396829" description="E3 ubiquitin-protein ligase ORTHRUS 5">
    <location>
        <begin position="1"/>
        <end position="623"/>
    </location>
</feature>
<feature type="domain" description="YDG" evidence="3">
    <location>
        <begin position="258"/>
        <end position="407"/>
    </location>
</feature>
<feature type="zinc finger region" description="PHD-type">
    <location>
        <begin position="12"/>
        <end position="62"/>
    </location>
</feature>
<feature type="zinc finger region" description="RING-type 1" evidence="2">
    <location>
        <begin position="129"/>
        <end position="169"/>
    </location>
</feature>
<feature type="zinc finger region" description="RING-type 2" evidence="2">
    <location>
        <begin position="498"/>
        <end position="555"/>
    </location>
</feature>
<feature type="region of interest" description="Disordered" evidence="4">
    <location>
        <begin position="580"/>
        <end position="623"/>
    </location>
</feature>
<feature type="compositionally biased region" description="Acidic residues" evidence="4">
    <location>
        <begin position="594"/>
        <end position="603"/>
    </location>
</feature>
<feature type="compositionally biased region" description="Basic and acidic residues" evidence="4">
    <location>
        <begin position="604"/>
        <end position="613"/>
    </location>
</feature>
<reference key="1">
    <citation type="journal article" date="2000" name="Nature">
        <title>Sequence and analysis of chromosome 1 of the plant Arabidopsis thaliana.</title>
        <authorList>
            <person name="Theologis A."/>
            <person name="Ecker J.R."/>
            <person name="Palm C.J."/>
            <person name="Federspiel N.A."/>
            <person name="Kaul S."/>
            <person name="White O."/>
            <person name="Alonso J."/>
            <person name="Altafi H."/>
            <person name="Araujo R."/>
            <person name="Bowman C.L."/>
            <person name="Brooks S.Y."/>
            <person name="Buehler E."/>
            <person name="Chan A."/>
            <person name="Chao Q."/>
            <person name="Chen H."/>
            <person name="Cheuk R.F."/>
            <person name="Chin C.W."/>
            <person name="Chung M.K."/>
            <person name="Conn L."/>
            <person name="Conway A.B."/>
            <person name="Conway A.R."/>
            <person name="Creasy T.H."/>
            <person name="Dewar K."/>
            <person name="Dunn P."/>
            <person name="Etgu P."/>
            <person name="Feldblyum T.V."/>
            <person name="Feng J.-D."/>
            <person name="Fong B."/>
            <person name="Fujii C.Y."/>
            <person name="Gill J.E."/>
            <person name="Goldsmith A.D."/>
            <person name="Haas B."/>
            <person name="Hansen N.F."/>
            <person name="Hughes B."/>
            <person name="Huizar L."/>
            <person name="Hunter J.L."/>
            <person name="Jenkins J."/>
            <person name="Johnson-Hopson C."/>
            <person name="Khan S."/>
            <person name="Khaykin E."/>
            <person name="Kim C.J."/>
            <person name="Koo H.L."/>
            <person name="Kremenetskaia I."/>
            <person name="Kurtz D.B."/>
            <person name="Kwan A."/>
            <person name="Lam B."/>
            <person name="Langin-Hooper S."/>
            <person name="Lee A."/>
            <person name="Lee J.M."/>
            <person name="Lenz C.A."/>
            <person name="Li J.H."/>
            <person name="Li Y.-P."/>
            <person name="Lin X."/>
            <person name="Liu S.X."/>
            <person name="Liu Z.A."/>
            <person name="Luros J.S."/>
            <person name="Maiti R."/>
            <person name="Marziali A."/>
            <person name="Militscher J."/>
            <person name="Miranda M."/>
            <person name="Nguyen M."/>
            <person name="Nierman W.C."/>
            <person name="Osborne B.I."/>
            <person name="Pai G."/>
            <person name="Peterson J."/>
            <person name="Pham P.K."/>
            <person name="Rizzo M."/>
            <person name="Rooney T."/>
            <person name="Rowley D."/>
            <person name="Sakano H."/>
            <person name="Salzberg S.L."/>
            <person name="Schwartz J.R."/>
            <person name="Shinn P."/>
            <person name="Southwick A.M."/>
            <person name="Sun H."/>
            <person name="Tallon L.J."/>
            <person name="Tambunga G."/>
            <person name="Toriumi M.J."/>
            <person name="Town C.D."/>
            <person name="Utterback T."/>
            <person name="Van Aken S."/>
            <person name="Vaysberg M."/>
            <person name="Vysotskaia V.S."/>
            <person name="Walker M."/>
            <person name="Wu D."/>
            <person name="Yu G."/>
            <person name="Fraser C.M."/>
            <person name="Venter J.C."/>
            <person name="Davis R.W."/>
        </authorList>
    </citation>
    <scope>NUCLEOTIDE SEQUENCE [LARGE SCALE GENOMIC DNA]</scope>
    <source>
        <strain>cv. Columbia</strain>
    </source>
</reference>
<reference key="2">
    <citation type="journal article" date="2017" name="Plant J.">
        <title>Araport11: a complete reannotation of the Arabidopsis thaliana reference genome.</title>
        <authorList>
            <person name="Cheng C.Y."/>
            <person name="Krishnakumar V."/>
            <person name="Chan A.P."/>
            <person name="Thibaud-Nissen F."/>
            <person name="Schobel S."/>
            <person name="Town C.D."/>
        </authorList>
    </citation>
    <scope>GENOME REANNOTATION</scope>
    <source>
        <strain>cv. Columbia</strain>
    </source>
</reference>
<reference key="3">
    <citation type="journal article" date="2003" name="Science">
        <title>Empirical analysis of transcriptional activity in the Arabidopsis genome.</title>
        <authorList>
            <person name="Yamada K."/>
            <person name="Lim J."/>
            <person name="Dale J.M."/>
            <person name="Chen H."/>
            <person name="Shinn P."/>
            <person name="Palm C.J."/>
            <person name="Southwick A.M."/>
            <person name="Wu H.C."/>
            <person name="Kim C.J."/>
            <person name="Nguyen M."/>
            <person name="Pham P.K."/>
            <person name="Cheuk R.F."/>
            <person name="Karlin-Newmann G."/>
            <person name="Liu S.X."/>
            <person name="Lam B."/>
            <person name="Sakano H."/>
            <person name="Wu T."/>
            <person name="Yu G."/>
            <person name="Miranda M."/>
            <person name="Quach H.L."/>
            <person name="Tripp M."/>
            <person name="Chang C.H."/>
            <person name="Lee J.M."/>
            <person name="Toriumi M.J."/>
            <person name="Chan M.M."/>
            <person name="Tang C.C."/>
            <person name="Onodera C.S."/>
            <person name="Deng J.M."/>
            <person name="Akiyama K."/>
            <person name="Ansari Y."/>
            <person name="Arakawa T."/>
            <person name="Banh J."/>
            <person name="Banno F."/>
            <person name="Bowser L."/>
            <person name="Brooks S.Y."/>
            <person name="Carninci P."/>
            <person name="Chao Q."/>
            <person name="Choy N."/>
            <person name="Enju A."/>
            <person name="Goldsmith A.D."/>
            <person name="Gurjal M."/>
            <person name="Hansen N.F."/>
            <person name="Hayashizaki Y."/>
            <person name="Johnson-Hopson C."/>
            <person name="Hsuan V.W."/>
            <person name="Iida K."/>
            <person name="Karnes M."/>
            <person name="Khan S."/>
            <person name="Koesema E."/>
            <person name="Ishida J."/>
            <person name="Jiang P.X."/>
            <person name="Jones T."/>
            <person name="Kawai J."/>
            <person name="Kamiya A."/>
            <person name="Meyers C."/>
            <person name="Nakajima M."/>
            <person name="Narusaka M."/>
            <person name="Seki M."/>
            <person name="Sakurai T."/>
            <person name="Satou M."/>
            <person name="Tamse R."/>
            <person name="Vaysberg M."/>
            <person name="Wallender E.K."/>
            <person name="Wong C."/>
            <person name="Yamamura Y."/>
            <person name="Yuan S."/>
            <person name="Shinozaki K."/>
            <person name="Davis R.W."/>
            <person name="Theologis A."/>
            <person name="Ecker J.R."/>
        </authorList>
    </citation>
    <scope>NUCLEOTIDE SEQUENCE [LARGE SCALE MRNA]</scope>
    <source>
        <strain>cv. Columbia</strain>
    </source>
</reference>
<reference key="4">
    <citation type="submission" date="2004-09" db="EMBL/GenBank/DDBJ databases">
        <title>Large-scale analysis of RIKEN Arabidopsis full-length (RAFL) cDNAs.</title>
        <authorList>
            <person name="Totoki Y."/>
            <person name="Seki M."/>
            <person name="Ishida J."/>
            <person name="Nakajima M."/>
            <person name="Enju A."/>
            <person name="Kamiya A."/>
            <person name="Narusaka M."/>
            <person name="Shin-i T."/>
            <person name="Nakagawa M."/>
            <person name="Sakamoto N."/>
            <person name="Oishi K."/>
            <person name="Kohara Y."/>
            <person name="Kobayashi M."/>
            <person name="Toyoda A."/>
            <person name="Sakaki Y."/>
            <person name="Sakurai T."/>
            <person name="Iida K."/>
            <person name="Akiyama K."/>
            <person name="Satou M."/>
            <person name="Toyoda T."/>
            <person name="Konagaya A."/>
            <person name="Carninci P."/>
            <person name="Kawai J."/>
            <person name="Hayashizaki Y."/>
            <person name="Shinozaki K."/>
        </authorList>
    </citation>
    <scope>NUCLEOTIDE SEQUENCE [LARGE SCALE MRNA]</scope>
    <source>
        <strain>cv. Columbia</strain>
    </source>
</reference>
<reference key="5">
    <citation type="journal article" date="2002" name="Genome Biol.">
        <title>Evaluation and classification of RING-finger domains encoded by the Arabidopsis genome.</title>
        <authorList>
            <person name="Kosarev P."/>
            <person name="Mayer K.F.X."/>
            <person name="Hardtke C.S."/>
        </authorList>
    </citation>
    <scope>GENE FAMILY ORGANIZATION</scope>
</reference>
<reference key="6">
    <citation type="journal article" date="2008" name="Plant J.">
        <title>ORTH/VIM proteins that regulate DNA methylation are functional ubiquitin E3 ligases.</title>
        <authorList>
            <person name="Kraft E."/>
            <person name="Bostick M."/>
            <person name="Jacobsen S.E."/>
            <person name="Callis J."/>
        </authorList>
    </citation>
    <scope>FUNCTION</scope>
    <scope>GENE FAMILY</scope>
    <scope>NOMENCLATURE</scope>
</reference>
<reference key="7">
    <citation type="journal article" date="2008" name="PLoS Genet.">
        <title>Three SRA-domain methylcytosine-binding proteins cooperate to maintain global CpG methylation and epigenetic silencing in Arabidopsis.</title>
        <authorList>
            <person name="Woo H.R."/>
            <person name="Dittmer T.A."/>
            <person name="Richards E.J."/>
        </authorList>
    </citation>
    <scope>FUNCTION</scope>
    <scope>DISRUPTION PHENOTYPE</scope>
    <scope>TISSUE SPECIFICITY</scope>
    <scope>SUBCELLULAR LOCATION</scope>
</reference>
<sequence length="623" mass="68719">MAIQTQLPCDGDGVCMRCQVNPPSEETLTCGTCVTPWHVSCLLPESLASSTGDWECPDCSGVVVPSAAPGTGISGPESSGSVLVTAIRAIQADVTLTEAEKAKKRQRLMSGGGDDGVDDEEKKKLEIFCSICIQLPERPVTTPCGHNFCLKCFEKWAVGQGKLTCMICRSKIPRHVAKNPRINLALVSAIRLANVTKCSGEATAAKVHHIIRNQDRPDKAFTTERAVKTGKANAASGKFFVTIPRDHFGPIPAANDVTRNQGVLVGESWEDRQECRQWGVHFPHVAGIAGQAAVGAQSVALSGGYDDDEDHGEWFLYTGSGGRDLSGNKRVNKIQSSDQAFKNMNEALRLSCKMGYPVRVVRSWKEKRSAYAPAEGVRYDGVYRIEKCWSNVGVQGLHKMCRYLFVRCDNEPAPWTSDEHGDRPRPLPDVPELENATDLFVRKESPSWGFDEAEGRWKWMKSPPVSRMALDTEERKKNKRAKKGNNAMKARLLKEFSCQICRKVLSLPVTTPCAHNFCKACLEAKFAGITQLRDRSNGVRKLRAKKNIMTCPCCTTDLSEFLQNPQVNREMMEIIENFKKSEEEAEVAESSNISEEEGEEESEPPTKKIKMDKNSVGGTSLSA</sequence>
<gene>
    <name type="primary">ORTH5</name>
    <name type="synonym">VIM2</name>
    <name type="ordered locus">At1g66050</name>
    <name type="ORF">F15E12.5</name>
</gene>
<organism>
    <name type="scientific">Arabidopsis thaliana</name>
    <name type="common">Mouse-ear cress</name>
    <dbReference type="NCBI Taxonomy" id="3702"/>
    <lineage>
        <taxon>Eukaryota</taxon>
        <taxon>Viridiplantae</taxon>
        <taxon>Streptophyta</taxon>
        <taxon>Embryophyta</taxon>
        <taxon>Tracheophyta</taxon>
        <taxon>Spermatophyta</taxon>
        <taxon>Magnoliopsida</taxon>
        <taxon>eudicotyledons</taxon>
        <taxon>Gunneridae</taxon>
        <taxon>Pentapetalae</taxon>
        <taxon>rosids</taxon>
        <taxon>malvids</taxon>
        <taxon>Brassicales</taxon>
        <taxon>Brassicaceae</taxon>
        <taxon>Camelineae</taxon>
        <taxon>Arabidopsis</taxon>
    </lineage>
</organism>
<comment type="function">
    <text evidence="5 6">E3 ubiquitin-protein ligase. Participates in CpG methylation-dependent transcriptional regulation and epigenetic transcriptional silencing. Mediates ubiquitination with the E2 ubiquitin-conjugating enzyme UBC11.</text>
</comment>
<comment type="catalytic activity">
    <reaction>
        <text>S-ubiquitinyl-[E2 ubiquitin-conjugating enzyme]-L-cysteine + [acceptor protein]-L-lysine = [E2 ubiquitin-conjugating enzyme]-L-cysteine + N(6)-ubiquitinyl-[acceptor protein]-L-lysine.</text>
        <dbReference type="EC" id="2.3.2.27"/>
    </reaction>
</comment>
<comment type="pathway">
    <text>Protein modification; protein ubiquitination.</text>
</comment>
<comment type="subcellular location">
    <subcellularLocation>
        <location evidence="3 6">Nucleus</location>
    </subcellularLocation>
    <text>Broadly distributed in the nucleus and enriched in the heterochromatic chromocenters.</text>
</comment>
<comment type="tissue specificity">
    <text evidence="6">Expressed in inflorescences.</text>
</comment>
<comment type="domain">
    <text evidence="1">The RING fingers are required for ubiquitin ligase activity.</text>
</comment>
<comment type="domain">
    <text evidence="1">The YDG domain mediates the interaction with histone H3.</text>
</comment>
<comment type="disruption phenotype">
    <text evidence="6">Decreased DNA methylation primarily at CpG sites in genic regions, as well as repeated sequences in heterochromatic regions. Released transcriptional silencing at heterochromatin regions. Ectopic CpHpH methylation in the 5S rRNA genes against a background of CpG hypomethylation.</text>
</comment>
<comment type="sequence caution" evidence="7">
    <conflict type="erroneous gene model prediction">
        <sequence resource="EMBL-CDS" id="AAG51305"/>
    </conflict>
</comment>
<comment type="sequence caution" evidence="7">
    <conflict type="miscellaneous discrepancy">
        <sequence resource="EMBL-CDS" id="AAQ65191"/>
    </conflict>
    <text>Sequencing or cloning errors.</text>
</comment>
<keyword id="KW-0156">Chromatin regulator</keyword>
<keyword id="KW-0238">DNA-binding</keyword>
<keyword id="KW-0479">Metal-binding</keyword>
<keyword id="KW-0539">Nucleus</keyword>
<keyword id="KW-1185">Reference proteome</keyword>
<keyword id="KW-0677">Repeat</keyword>
<keyword id="KW-0808">Transferase</keyword>
<keyword id="KW-0833">Ubl conjugation pathway</keyword>
<keyword id="KW-0862">Zinc</keyword>
<keyword id="KW-0863">Zinc-finger</keyword>
<dbReference type="EC" id="2.3.2.27"/>
<dbReference type="EMBL" id="AC026480">
    <property type="protein sequence ID" value="AAG51305.1"/>
    <property type="status" value="ALT_SEQ"/>
    <property type="molecule type" value="Genomic_DNA"/>
</dbReference>
<dbReference type="EMBL" id="CP002684">
    <property type="protein sequence ID" value="AEE34456.1"/>
    <property type="molecule type" value="Genomic_DNA"/>
</dbReference>
<dbReference type="EMBL" id="BT010568">
    <property type="protein sequence ID" value="AAQ65191.1"/>
    <property type="status" value="ALT_SEQ"/>
    <property type="molecule type" value="mRNA"/>
</dbReference>
<dbReference type="EMBL" id="AK175694">
    <property type="protein sequence ID" value="BAD43457.1"/>
    <property type="molecule type" value="mRNA"/>
</dbReference>
<dbReference type="EMBL" id="AK175887">
    <property type="protein sequence ID" value="BAD43650.1"/>
    <property type="molecule type" value="mRNA"/>
</dbReference>
<dbReference type="EMBL" id="AK176012">
    <property type="protein sequence ID" value="BAD43775.1"/>
    <property type="molecule type" value="mRNA"/>
</dbReference>
<dbReference type="PIR" id="A96685">
    <property type="entry name" value="A96685"/>
</dbReference>
<dbReference type="RefSeq" id="NP_176779.2">
    <property type="nucleotide sequence ID" value="NM_105276.4"/>
</dbReference>
<dbReference type="SMR" id="Q680I0"/>
<dbReference type="FunCoup" id="Q680I0">
    <property type="interactions" value="1735"/>
</dbReference>
<dbReference type="STRING" id="3702.Q680I0"/>
<dbReference type="BindingDB" id="Q680I0"/>
<dbReference type="PaxDb" id="3702-AT1G66050.1"/>
<dbReference type="EnsemblPlants" id="AT1G66050.1">
    <property type="protein sequence ID" value="AT1G66050.1"/>
    <property type="gene ID" value="AT1G66050"/>
</dbReference>
<dbReference type="GeneID" id="842919"/>
<dbReference type="Gramene" id="AT1G66050.1">
    <property type="protein sequence ID" value="AT1G66050.1"/>
    <property type="gene ID" value="AT1G66050"/>
</dbReference>
<dbReference type="KEGG" id="ath:AT1G66050"/>
<dbReference type="Araport" id="AT1G66050"/>
<dbReference type="TAIR" id="AT1G66050">
    <property type="gene designation" value="VIM2"/>
</dbReference>
<dbReference type="eggNOG" id="ENOG502QRDQ">
    <property type="taxonomic scope" value="Eukaryota"/>
</dbReference>
<dbReference type="HOGENOM" id="CLU_016281_0_0_1"/>
<dbReference type="InParanoid" id="Q680I0"/>
<dbReference type="OMA" id="LGENICC"/>
<dbReference type="PhylomeDB" id="Q680I0"/>
<dbReference type="UniPathway" id="UPA00143"/>
<dbReference type="PRO" id="PR:Q680I0"/>
<dbReference type="Proteomes" id="UP000006548">
    <property type="component" value="Chromosome 1"/>
</dbReference>
<dbReference type="ExpressionAtlas" id="Q680I0">
    <property type="expression patterns" value="baseline and differential"/>
</dbReference>
<dbReference type="GO" id="GO:0005634">
    <property type="term" value="C:nucleus"/>
    <property type="evidence" value="ECO:0000314"/>
    <property type="project" value="UniProtKB"/>
</dbReference>
<dbReference type="GO" id="GO:0042393">
    <property type="term" value="F:histone binding"/>
    <property type="evidence" value="ECO:0000250"/>
    <property type="project" value="UniProtKB"/>
</dbReference>
<dbReference type="GO" id="GO:0008327">
    <property type="term" value="F:methyl-CpG binding"/>
    <property type="evidence" value="ECO:0000250"/>
    <property type="project" value="UniProtKB"/>
</dbReference>
<dbReference type="GO" id="GO:0010428">
    <property type="term" value="F:methyl-CpNpG binding"/>
    <property type="evidence" value="ECO:0000250"/>
    <property type="project" value="UniProtKB"/>
</dbReference>
<dbReference type="GO" id="GO:0010429">
    <property type="term" value="F:methyl-CpNpN binding"/>
    <property type="evidence" value="ECO:0000250"/>
    <property type="project" value="UniProtKB"/>
</dbReference>
<dbReference type="GO" id="GO:0004842">
    <property type="term" value="F:ubiquitin-protein transferase activity"/>
    <property type="evidence" value="ECO:0000314"/>
    <property type="project" value="TAIR"/>
</dbReference>
<dbReference type="GO" id="GO:0008270">
    <property type="term" value="F:zinc ion binding"/>
    <property type="evidence" value="ECO:0007669"/>
    <property type="project" value="UniProtKB-KW"/>
</dbReference>
<dbReference type="GO" id="GO:0044027">
    <property type="term" value="P:negative regulation of gene expression via chromosomal CpG island methylation"/>
    <property type="evidence" value="ECO:0000315"/>
    <property type="project" value="UniProtKB"/>
</dbReference>
<dbReference type="GO" id="GO:0016567">
    <property type="term" value="P:protein ubiquitination"/>
    <property type="evidence" value="ECO:0000314"/>
    <property type="project" value="TAIR"/>
</dbReference>
<dbReference type="CDD" id="cd23138">
    <property type="entry name" value="RING-HC_ORTHRUS_rpt1"/>
    <property type="match status" value="1"/>
</dbReference>
<dbReference type="CDD" id="cd23139">
    <property type="entry name" value="RING-HC_ORTHRUS_rpt2"/>
    <property type="match status" value="1"/>
</dbReference>
<dbReference type="FunFam" id="2.30.280.10:FF:000002">
    <property type="entry name" value="E3 ubiquitin-protein ligase ORTHRUS 2"/>
    <property type="match status" value="1"/>
</dbReference>
<dbReference type="FunFam" id="3.30.40.10:FF:001023">
    <property type="entry name" value="E3 ubiquitin-protein ligase ORTHRUS 2"/>
    <property type="match status" value="1"/>
</dbReference>
<dbReference type="FunFam" id="3.30.40.10:FF:000737">
    <property type="entry name" value="E3 ubiquitin-protein ligase ORTHRUS 3"/>
    <property type="match status" value="1"/>
</dbReference>
<dbReference type="Gene3D" id="2.30.280.10">
    <property type="entry name" value="SRA-YDG"/>
    <property type="match status" value="1"/>
</dbReference>
<dbReference type="Gene3D" id="3.30.40.10">
    <property type="entry name" value="Zinc/RING finger domain, C3HC4 (zinc finger)"/>
    <property type="match status" value="3"/>
</dbReference>
<dbReference type="InterPro" id="IPR015947">
    <property type="entry name" value="PUA-like_sf"/>
</dbReference>
<dbReference type="InterPro" id="IPR047498">
    <property type="entry name" value="RING-HC_ORTHRUS_rpt1"/>
</dbReference>
<dbReference type="InterPro" id="IPR047529">
    <property type="entry name" value="RING-HC_ORTHRUS_rpt2"/>
</dbReference>
<dbReference type="InterPro" id="IPR036987">
    <property type="entry name" value="SRA-YDG_sf"/>
</dbReference>
<dbReference type="InterPro" id="IPR003105">
    <property type="entry name" value="SRA_YDG"/>
</dbReference>
<dbReference type="InterPro" id="IPR045134">
    <property type="entry name" value="UHRF1/2-like"/>
</dbReference>
<dbReference type="InterPro" id="IPR019786">
    <property type="entry name" value="Zinc_finger_PHD-type_CS"/>
</dbReference>
<dbReference type="InterPro" id="IPR027370">
    <property type="entry name" value="Znf-RING_euk"/>
</dbReference>
<dbReference type="InterPro" id="IPR011011">
    <property type="entry name" value="Znf_FYVE_PHD"/>
</dbReference>
<dbReference type="InterPro" id="IPR001965">
    <property type="entry name" value="Znf_PHD"/>
</dbReference>
<dbReference type="InterPro" id="IPR001841">
    <property type="entry name" value="Znf_RING"/>
</dbReference>
<dbReference type="InterPro" id="IPR013083">
    <property type="entry name" value="Znf_RING/FYVE/PHD"/>
</dbReference>
<dbReference type="InterPro" id="IPR017907">
    <property type="entry name" value="Znf_RING_CS"/>
</dbReference>
<dbReference type="PANTHER" id="PTHR14140:SF46">
    <property type="entry name" value="E3 UBIQUITIN-PROTEIN LIGASE ORTHRUS 1-RELATED"/>
    <property type="match status" value="1"/>
</dbReference>
<dbReference type="PANTHER" id="PTHR14140">
    <property type="entry name" value="E3 UBIQUITIN-PROTEIN LIGASE UHRF-RELATED"/>
    <property type="match status" value="1"/>
</dbReference>
<dbReference type="Pfam" id="PF02182">
    <property type="entry name" value="SAD_SRA"/>
    <property type="match status" value="1"/>
</dbReference>
<dbReference type="Pfam" id="PF13920">
    <property type="entry name" value="zf-C3HC4_3"/>
    <property type="match status" value="1"/>
</dbReference>
<dbReference type="Pfam" id="PF13445">
    <property type="entry name" value="zf-RING_UBOX"/>
    <property type="match status" value="1"/>
</dbReference>
<dbReference type="SMART" id="SM00249">
    <property type="entry name" value="PHD"/>
    <property type="match status" value="1"/>
</dbReference>
<dbReference type="SMART" id="SM00184">
    <property type="entry name" value="RING"/>
    <property type="match status" value="2"/>
</dbReference>
<dbReference type="SMART" id="SM00466">
    <property type="entry name" value="SRA"/>
    <property type="match status" value="1"/>
</dbReference>
<dbReference type="SUPFAM" id="SSF57903">
    <property type="entry name" value="FYVE/PHD zinc finger"/>
    <property type="match status" value="1"/>
</dbReference>
<dbReference type="SUPFAM" id="SSF88697">
    <property type="entry name" value="PUA domain-like"/>
    <property type="match status" value="1"/>
</dbReference>
<dbReference type="SUPFAM" id="SSF57850">
    <property type="entry name" value="RING/U-box"/>
    <property type="match status" value="2"/>
</dbReference>
<dbReference type="PROSITE" id="PS51015">
    <property type="entry name" value="YDG"/>
    <property type="match status" value="1"/>
</dbReference>
<dbReference type="PROSITE" id="PS01359">
    <property type="entry name" value="ZF_PHD_1"/>
    <property type="match status" value="1"/>
</dbReference>
<dbReference type="PROSITE" id="PS00518">
    <property type="entry name" value="ZF_RING_1"/>
    <property type="match status" value="1"/>
</dbReference>
<dbReference type="PROSITE" id="PS50089">
    <property type="entry name" value="ZF_RING_2"/>
    <property type="match status" value="2"/>
</dbReference>
<accession>Q680I0</accession>
<accession>Q6NQ90</accession>
<accession>Q9C8E0</accession>
<proteinExistence type="evidence at transcript level"/>